<protein>
    <recommendedName>
        <fullName>Uncharacterized membrane protein YnxB</fullName>
    </recommendedName>
</protein>
<gene>
    <name type="primary">ynxB</name>
    <name type="synonym">ynaA</name>
    <name type="ordered locus">BSU17470</name>
</gene>
<dbReference type="EMBL" id="M22811">
    <property type="protein sequence ID" value="AAA83377.1"/>
    <property type="molecule type" value="Genomic_DNA"/>
</dbReference>
<dbReference type="EMBL" id="U66480">
    <property type="protein sequence ID" value="AAB41081.1"/>
    <property type="molecule type" value="Genomic_DNA"/>
</dbReference>
<dbReference type="EMBL" id="AL009126">
    <property type="protein sequence ID" value="CAB13631.1"/>
    <property type="molecule type" value="Genomic_DNA"/>
</dbReference>
<dbReference type="PIR" id="JT0394">
    <property type="entry name" value="JT0394"/>
</dbReference>
<dbReference type="RefSeq" id="NP_389629.1">
    <property type="nucleotide sequence ID" value="NC_000964.3"/>
</dbReference>
<dbReference type="RefSeq" id="WP_009967315.1">
    <property type="nucleotide sequence ID" value="NZ_OZ025638.1"/>
</dbReference>
<dbReference type="SMR" id="P31844"/>
<dbReference type="FunCoup" id="P31844">
    <property type="interactions" value="15"/>
</dbReference>
<dbReference type="STRING" id="224308.BSU17470"/>
<dbReference type="PaxDb" id="224308-BSU17470"/>
<dbReference type="EnsemblBacteria" id="CAB13631">
    <property type="protein sequence ID" value="CAB13631"/>
    <property type="gene ID" value="BSU_17470"/>
</dbReference>
<dbReference type="GeneID" id="939610"/>
<dbReference type="KEGG" id="bsu:BSU17470"/>
<dbReference type="PATRIC" id="fig|224308.179.peg.1895"/>
<dbReference type="InParanoid" id="P31844"/>
<dbReference type="OrthoDB" id="2910266at2"/>
<dbReference type="BioCyc" id="BSUB:BSU17470-MONOMER"/>
<dbReference type="Proteomes" id="UP000001570">
    <property type="component" value="Chromosome"/>
</dbReference>
<dbReference type="GO" id="GO:0005886">
    <property type="term" value="C:plasma membrane"/>
    <property type="evidence" value="ECO:0007669"/>
    <property type="project" value="UniProtKB-SubCell"/>
</dbReference>
<keyword id="KW-1003">Cell membrane</keyword>
<keyword id="KW-0472">Membrane</keyword>
<keyword id="KW-1185">Reference proteome</keyword>
<keyword id="KW-0812">Transmembrane</keyword>
<keyword id="KW-1133">Transmembrane helix</keyword>
<reference key="1">
    <citation type="journal article" date="1988" name="Gene">
        <title>Sequence of the Bacillus subtilis glutamine synthetase gene region.</title>
        <authorList>
            <person name="Strauch M.A."/>
            <person name="Aronson A.I."/>
            <person name="Brown S.W."/>
            <person name="Schreier H.J."/>
            <person name="Sonenshein A.L."/>
        </authorList>
    </citation>
    <scope>NUCLEOTIDE SEQUENCE [GENOMIC DNA]</scope>
</reference>
<reference key="2">
    <citation type="submission" date="1997-02" db="EMBL/GenBank/DDBJ databases">
        <title>Sequencing of a 26 kb region of the Bacillus subtilis genome downstream of spoVJ.</title>
        <authorList>
            <person name="Borchert S."/>
            <person name="Klein C."/>
            <person name="Piksa B."/>
            <person name="Hammelmann M."/>
            <person name="Entian K.-D."/>
        </authorList>
    </citation>
    <scope>NUCLEOTIDE SEQUENCE [GENOMIC DNA]</scope>
</reference>
<reference key="3">
    <citation type="journal article" date="1997" name="Nature">
        <title>The complete genome sequence of the Gram-positive bacterium Bacillus subtilis.</title>
        <authorList>
            <person name="Kunst F."/>
            <person name="Ogasawara N."/>
            <person name="Moszer I."/>
            <person name="Albertini A.M."/>
            <person name="Alloni G."/>
            <person name="Azevedo V."/>
            <person name="Bertero M.G."/>
            <person name="Bessieres P."/>
            <person name="Bolotin A."/>
            <person name="Borchert S."/>
            <person name="Borriss R."/>
            <person name="Boursier L."/>
            <person name="Brans A."/>
            <person name="Braun M."/>
            <person name="Brignell S.C."/>
            <person name="Bron S."/>
            <person name="Brouillet S."/>
            <person name="Bruschi C.V."/>
            <person name="Caldwell B."/>
            <person name="Capuano V."/>
            <person name="Carter N.M."/>
            <person name="Choi S.-K."/>
            <person name="Codani J.-J."/>
            <person name="Connerton I.F."/>
            <person name="Cummings N.J."/>
            <person name="Daniel R.A."/>
            <person name="Denizot F."/>
            <person name="Devine K.M."/>
            <person name="Duesterhoeft A."/>
            <person name="Ehrlich S.D."/>
            <person name="Emmerson P.T."/>
            <person name="Entian K.-D."/>
            <person name="Errington J."/>
            <person name="Fabret C."/>
            <person name="Ferrari E."/>
            <person name="Foulger D."/>
            <person name="Fritz C."/>
            <person name="Fujita M."/>
            <person name="Fujita Y."/>
            <person name="Fuma S."/>
            <person name="Galizzi A."/>
            <person name="Galleron N."/>
            <person name="Ghim S.-Y."/>
            <person name="Glaser P."/>
            <person name="Goffeau A."/>
            <person name="Golightly E.J."/>
            <person name="Grandi G."/>
            <person name="Guiseppi G."/>
            <person name="Guy B.J."/>
            <person name="Haga K."/>
            <person name="Haiech J."/>
            <person name="Harwood C.R."/>
            <person name="Henaut A."/>
            <person name="Hilbert H."/>
            <person name="Holsappel S."/>
            <person name="Hosono S."/>
            <person name="Hullo M.-F."/>
            <person name="Itaya M."/>
            <person name="Jones L.-M."/>
            <person name="Joris B."/>
            <person name="Karamata D."/>
            <person name="Kasahara Y."/>
            <person name="Klaerr-Blanchard M."/>
            <person name="Klein C."/>
            <person name="Kobayashi Y."/>
            <person name="Koetter P."/>
            <person name="Koningstein G."/>
            <person name="Krogh S."/>
            <person name="Kumano M."/>
            <person name="Kurita K."/>
            <person name="Lapidus A."/>
            <person name="Lardinois S."/>
            <person name="Lauber J."/>
            <person name="Lazarevic V."/>
            <person name="Lee S.-M."/>
            <person name="Levine A."/>
            <person name="Liu H."/>
            <person name="Masuda S."/>
            <person name="Mauel C."/>
            <person name="Medigue C."/>
            <person name="Medina N."/>
            <person name="Mellado R.P."/>
            <person name="Mizuno M."/>
            <person name="Moestl D."/>
            <person name="Nakai S."/>
            <person name="Noback M."/>
            <person name="Noone D."/>
            <person name="O'Reilly M."/>
            <person name="Ogawa K."/>
            <person name="Ogiwara A."/>
            <person name="Oudega B."/>
            <person name="Park S.-H."/>
            <person name="Parro V."/>
            <person name="Pohl T.M."/>
            <person name="Portetelle D."/>
            <person name="Porwollik S."/>
            <person name="Prescott A.M."/>
            <person name="Presecan E."/>
            <person name="Pujic P."/>
            <person name="Purnelle B."/>
            <person name="Rapoport G."/>
            <person name="Rey M."/>
            <person name="Reynolds S."/>
            <person name="Rieger M."/>
            <person name="Rivolta C."/>
            <person name="Rocha E."/>
            <person name="Roche B."/>
            <person name="Rose M."/>
            <person name="Sadaie Y."/>
            <person name="Sato T."/>
            <person name="Scanlan E."/>
            <person name="Schleich S."/>
            <person name="Schroeter R."/>
            <person name="Scoffone F."/>
            <person name="Sekiguchi J."/>
            <person name="Sekowska A."/>
            <person name="Seror S.J."/>
            <person name="Serror P."/>
            <person name="Shin B.-S."/>
            <person name="Soldo B."/>
            <person name="Sorokin A."/>
            <person name="Tacconi E."/>
            <person name="Takagi T."/>
            <person name="Takahashi H."/>
            <person name="Takemaru K."/>
            <person name="Takeuchi M."/>
            <person name="Tamakoshi A."/>
            <person name="Tanaka T."/>
            <person name="Terpstra P."/>
            <person name="Tognoni A."/>
            <person name="Tosato V."/>
            <person name="Uchiyama S."/>
            <person name="Vandenbol M."/>
            <person name="Vannier F."/>
            <person name="Vassarotti A."/>
            <person name="Viari A."/>
            <person name="Wambutt R."/>
            <person name="Wedler E."/>
            <person name="Wedler H."/>
            <person name="Weitzenegger T."/>
            <person name="Winters P."/>
            <person name="Wipat A."/>
            <person name="Yamamoto H."/>
            <person name="Yamane K."/>
            <person name="Yasumoto K."/>
            <person name="Yata K."/>
            <person name="Yoshida K."/>
            <person name="Yoshikawa H.-F."/>
            <person name="Zumstein E."/>
            <person name="Yoshikawa H."/>
            <person name="Danchin A."/>
        </authorList>
    </citation>
    <scope>NUCLEOTIDE SEQUENCE [LARGE SCALE GENOMIC DNA]</scope>
    <source>
        <strain>168</strain>
    </source>
</reference>
<name>YNXB_BACSU</name>
<organism>
    <name type="scientific">Bacillus subtilis (strain 168)</name>
    <dbReference type="NCBI Taxonomy" id="224308"/>
    <lineage>
        <taxon>Bacteria</taxon>
        <taxon>Bacillati</taxon>
        <taxon>Bacillota</taxon>
        <taxon>Bacilli</taxon>
        <taxon>Bacillales</taxon>
        <taxon>Bacillaceae</taxon>
        <taxon>Bacillus</taxon>
    </lineage>
</organism>
<proteinExistence type="predicted"/>
<evidence type="ECO:0000255" key="1"/>
<evidence type="ECO:0000305" key="2"/>
<feature type="chain" id="PRO_0000049644" description="Uncharacterized membrane protein YnxB">
    <location>
        <begin position="1"/>
        <end position="96"/>
    </location>
</feature>
<feature type="transmembrane region" description="Helical" evidence="1">
    <location>
        <begin position="3"/>
        <end position="23"/>
    </location>
</feature>
<feature type="transmembrane region" description="Helical" evidence="1">
    <location>
        <begin position="30"/>
        <end position="50"/>
    </location>
</feature>
<feature type="transmembrane region" description="Helical" evidence="1">
    <location>
        <begin position="68"/>
        <end position="88"/>
    </location>
</feature>
<accession>P31844</accession>
<comment type="subcellular location">
    <subcellularLocation>
        <location evidence="2">Cell membrane</location>
        <topology evidence="2">Multi-pass membrane protein</topology>
    </subcellularLocation>
</comment>
<sequence>MKKLTIFSGGLGAVFSVLAQLFAVIDDSYTLGNLWFLGALAGIITMLASIQTNNKPVFSILLIASSVIGLLGTGLVYIIPTLFNIIIIYKFSKVSQ</sequence>